<protein>
    <recommendedName>
        <fullName evidence="1">Acetaldehyde dehydrogenase 1</fullName>
        <ecNumber evidence="1">1.2.1.10</ecNumber>
    </recommendedName>
    <alternativeName>
        <fullName evidence="1">Acetaldehyde dehydrogenase [acetylating] 1</fullName>
    </alternativeName>
</protein>
<keyword id="KW-0058">Aromatic hydrocarbons catabolism</keyword>
<keyword id="KW-0520">NAD</keyword>
<keyword id="KW-0560">Oxidoreductase</keyword>
<reference key="1">
    <citation type="submission" date="2007-02" db="EMBL/GenBank/DDBJ databases">
        <title>Complete sequence of Mycobacterium sp. JLS.</title>
        <authorList>
            <consortium name="US DOE Joint Genome Institute"/>
            <person name="Copeland A."/>
            <person name="Lucas S."/>
            <person name="Lapidus A."/>
            <person name="Barry K."/>
            <person name="Detter J.C."/>
            <person name="Glavina del Rio T."/>
            <person name="Hammon N."/>
            <person name="Israni S."/>
            <person name="Dalin E."/>
            <person name="Tice H."/>
            <person name="Pitluck S."/>
            <person name="Chain P."/>
            <person name="Malfatti S."/>
            <person name="Shin M."/>
            <person name="Vergez L."/>
            <person name="Schmutz J."/>
            <person name="Larimer F."/>
            <person name="Land M."/>
            <person name="Hauser L."/>
            <person name="Kyrpides N."/>
            <person name="Mikhailova N."/>
            <person name="Miller C.D."/>
            <person name="Anderson A.J."/>
            <person name="Sims R.C."/>
            <person name="Richardson P."/>
        </authorList>
    </citation>
    <scope>NUCLEOTIDE SEQUENCE [LARGE SCALE GENOMIC DNA]</scope>
    <source>
        <strain>JLS</strain>
    </source>
</reference>
<proteinExistence type="inferred from homology"/>
<evidence type="ECO:0000255" key="1">
    <source>
        <dbReference type="HAMAP-Rule" id="MF_01657"/>
    </source>
</evidence>
<comment type="catalytic activity">
    <reaction evidence="1">
        <text>acetaldehyde + NAD(+) + CoA = acetyl-CoA + NADH + H(+)</text>
        <dbReference type="Rhea" id="RHEA:23288"/>
        <dbReference type="ChEBI" id="CHEBI:15343"/>
        <dbReference type="ChEBI" id="CHEBI:15378"/>
        <dbReference type="ChEBI" id="CHEBI:57287"/>
        <dbReference type="ChEBI" id="CHEBI:57288"/>
        <dbReference type="ChEBI" id="CHEBI:57540"/>
        <dbReference type="ChEBI" id="CHEBI:57945"/>
        <dbReference type="EC" id="1.2.1.10"/>
    </reaction>
</comment>
<comment type="similarity">
    <text evidence="1">Belongs to the acetaldehyde dehydrogenase family.</text>
</comment>
<gene>
    <name type="ordered locus">Mjls_4223</name>
</gene>
<name>ACDH1_MYCSJ</name>
<dbReference type="EC" id="1.2.1.10" evidence="1"/>
<dbReference type="EMBL" id="CP000580">
    <property type="protein sequence ID" value="ABN99995.1"/>
    <property type="molecule type" value="Genomic_DNA"/>
</dbReference>
<dbReference type="SMR" id="A3Q4B8"/>
<dbReference type="KEGG" id="mjl:Mjls_4223"/>
<dbReference type="HOGENOM" id="CLU_062208_0_0_11"/>
<dbReference type="BioCyc" id="MSP164757:G1G8C-4264-MONOMER"/>
<dbReference type="GO" id="GO:0008774">
    <property type="term" value="F:acetaldehyde dehydrogenase (acetylating) activity"/>
    <property type="evidence" value="ECO:0007669"/>
    <property type="project" value="UniProtKB-UniRule"/>
</dbReference>
<dbReference type="GO" id="GO:0051287">
    <property type="term" value="F:NAD binding"/>
    <property type="evidence" value="ECO:0007669"/>
    <property type="project" value="UniProtKB-UniRule"/>
</dbReference>
<dbReference type="GO" id="GO:0009056">
    <property type="term" value="P:catabolic process"/>
    <property type="evidence" value="ECO:0007669"/>
    <property type="project" value="UniProtKB-KW"/>
</dbReference>
<dbReference type="CDD" id="cd23933">
    <property type="entry name" value="ALDH_C"/>
    <property type="match status" value="1"/>
</dbReference>
<dbReference type="Gene3D" id="3.30.360.10">
    <property type="entry name" value="Dihydrodipicolinate Reductase, domain 2"/>
    <property type="match status" value="1"/>
</dbReference>
<dbReference type="Gene3D" id="3.40.50.720">
    <property type="entry name" value="NAD(P)-binding Rossmann-like Domain"/>
    <property type="match status" value="1"/>
</dbReference>
<dbReference type="HAMAP" id="MF_01657">
    <property type="entry name" value="Ac_ald_DH_ac"/>
    <property type="match status" value="1"/>
</dbReference>
<dbReference type="InterPro" id="IPR003361">
    <property type="entry name" value="Acetaldehyde_dehydrogenase"/>
</dbReference>
<dbReference type="InterPro" id="IPR015426">
    <property type="entry name" value="Acetylaldehyde_DH_C"/>
</dbReference>
<dbReference type="InterPro" id="IPR036291">
    <property type="entry name" value="NAD(P)-bd_dom_sf"/>
</dbReference>
<dbReference type="InterPro" id="IPR000534">
    <property type="entry name" value="Semialdehyde_DH_NAD-bd"/>
</dbReference>
<dbReference type="NCBIfam" id="TIGR03215">
    <property type="entry name" value="ac_ald_DH_ac"/>
    <property type="match status" value="1"/>
</dbReference>
<dbReference type="NCBIfam" id="NF006157">
    <property type="entry name" value="PRK08300.1"/>
    <property type="match status" value="1"/>
</dbReference>
<dbReference type="Pfam" id="PF09290">
    <property type="entry name" value="AcetDehyd-dimer"/>
    <property type="match status" value="1"/>
</dbReference>
<dbReference type="PIRSF" id="PIRSF015689">
    <property type="entry name" value="Actaldh_dh_actl"/>
    <property type="match status" value="1"/>
</dbReference>
<dbReference type="SMART" id="SM00859">
    <property type="entry name" value="Semialdhyde_dh"/>
    <property type="match status" value="1"/>
</dbReference>
<dbReference type="SUPFAM" id="SSF55347">
    <property type="entry name" value="Glyceraldehyde-3-phosphate dehydrogenase-like, C-terminal domain"/>
    <property type="match status" value="1"/>
</dbReference>
<dbReference type="SUPFAM" id="SSF51735">
    <property type="entry name" value="NAD(P)-binding Rossmann-fold domains"/>
    <property type="match status" value="1"/>
</dbReference>
<feature type="chain" id="PRO_0000387682" description="Acetaldehyde dehydrogenase 1">
    <location>
        <begin position="1"/>
        <end position="313"/>
    </location>
</feature>
<feature type="active site" description="Acyl-thioester intermediate" evidence="1">
    <location>
        <position position="131"/>
    </location>
</feature>
<feature type="binding site" evidence="1">
    <location>
        <begin position="16"/>
        <end position="19"/>
    </location>
    <ligand>
        <name>NAD(+)</name>
        <dbReference type="ChEBI" id="CHEBI:57540"/>
    </ligand>
</feature>
<feature type="binding site" evidence="1">
    <location>
        <begin position="162"/>
        <end position="170"/>
    </location>
    <ligand>
        <name>NAD(+)</name>
        <dbReference type="ChEBI" id="CHEBI:57540"/>
    </ligand>
</feature>
<feature type="binding site" evidence="1">
    <location>
        <position position="281"/>
    </location>
    <ligand>
        <name>NAD(+)</name>
        <dbReference type="ChEBI" id="CHEBI:57540"/>
    </ligand>
</feature>
<sequence>MPDKAGRKMQVAIVGSGNISTDLLYKLLRSEWLEPRWMIGIDPQSEGLARARTLGLETSHEGVDWLLARDELPDMVFEATSAYVHRDAAPRYAEAGIRAIDLTPAAVGPGVIPPANLREHLDAPNVNLVTCGGQATIPMVHAVSRVVGVPYAEIVASVSSASAGPGTRANIDEFTKTTSKGVETIGGARRGKAIIILNPADPPMIMRDTIFCAIPEDADQDAITASIKEVVAQVQTYVPGYRLLNEPQFDPPSVNSGGQALVTTFVEVEGAGDYLPPYAGNLDIMTAAATKVGEEIAAKLAGASLSASSGGRS</sequence>
<organism>
    <name type="scientific">Mycobacterium sp. (strain JLS)</name>
    <dbReference type="NCBI Taxonomy" id="164757"/>
    <lineage>
        <taxon>Bacteria</taxon>
        <taxon>Bacillati</taxon>
        <taxon>Actinomycetota</taxon>
        <taxon>Actinomycetes</taxon>
        <taxon>Mycobacteriales</taxon>
        <taxon>Mycobacteriaceae</taxon>
        <taxon>Mycobacterium</taxon>
    </lineage>
</organism>
<accession>A3Q4B8</accession>